<proteinExistence type="inferred from homology"/>
<sequence length="196" mass="21841">MSSKEQKTPEGQAPEEIIMDQHEEVEAVEPNDSAEQVDPRDEKIANLEVQLAEAQTRERDTVLRIKAEMENLRRRTEQDIEKAHKFALEKFVNELLPVIDSLDRALEVADKANPDMAAMVEGIELTLKSMLDVVRKFGVEVIAETNVPLDPNVHQAIAMVESEEVPAGNVLGIMQKGYTLNGRTIRAAMVTVAKAK</sequence>
<evidence type="ECO:0000255" key="1">
    <source>
        <dbReference type="HAMAP-Rule" id="MF_01151"/>
    </source>
</evidence>
<evidence type="ECO:0000256" key="2">
    <source>
        <dbReference type="SAM" id="MobiDB-lite"/>
    </source>
</evidence>
<name>GRPE_SALSV</name>
<protein>
    <recommendedName>
        <fullName evidence="1">Protein GrpE</fullName>
    </recommendedName>
    <alternativeName>
        <fullName evidence="1">HSP-70 cofactor</fullName>
    </alternativeName>
</protein>
<feature type="chain" id="PRO_1000137614" description="Protein GrpE">
    <location>
        <begin position="1"/>
        <end position="196"/>
    </location>
</feature>
<feature type="region of interest" description="Disordered" evidence="2">
    <location>
        <begin position="1"/>
        <end position="40"/>
    </location>
</feature>
<organism>
    <name type="scientific">Salmonella schwarzengrund (strain CVM19633)</name>
    <dbReference type="NCBI Taxonomy" id="439843"/>
    <lineage>
        <taxon>Bacteria</taxon>
        <taxon>Pseudomonadati</taxon>
        <taxon>Pseudomonadota</taxon>
        <taxon>Gammaproteobacteria</taxon>
        <taxon>Enterobacterales</taxon>
        <taxon>Enterobacteriaceae</taxon>
        <taxon>Salmonella</taxon>
    </lineage>
</organism>
<comment type="function">
    <text evidence="1">Participates actively in the response to hyperosmotic and heat shock by preventing the aggregation of stress-denatured proteins, in association with DnaK and GrpE. It is the nucleotide exchange factor for DnaK and may function as a thermosensor. Unfolded proteins bind initially to DnaJ; upon interaction with the DnaJ-bound protein, DnaK hydrolyzes its bound ATP, resulting in the formation of a stable complex. GrpE releases ADP from DnaK; ATP binding to DnaK triggers the release of the substrate protein, thus completing the reaction cycle. Several rounds of ATP-dependent interactions between DnaJ, DnaK and GrpE are required for fully efficient folding.</text>
</comment>
<comment type="subunit">
    <text evidence="1">Homodimer.</text>
</comment>
<comment type="subcellular location">
    <subcellularLocation>
        <location evidence="1">Cytoplasm</location>
    </subcellularLocation>
</comment>
<comment type="similarity">
    <text evidence="1">Belongs to the GrpE family.</text>
</comment>
<gene>
    <name evidence="1" type="primary">grpE</name>
    <name type="ordered locus">SeSA_A2877</name>
</gene>
<reference key="1">
    <citation type="journal article" date="2011" name="J. Bacteriol.">
        <title>Comparative genomics of 28 Salmonella enterica isolates: evidence for CRISPR-mediated adaptive sublineage evolution.</title>
        <authorList>
            <person name="Fricke W.F."/>
            <person name="Mammel M.K."/>
            <person name="McDermott P.F."/>
            <person name="Tartera C."/>
            <person name="White D.G."/>
            <person name="Leclerc J.E."/>
            <person name="Ravel J."/>
            <person name="Cebula T.A."/>
        </authorList>
    </citation>
    <scope>NUCLEOTIDE SEQUENCE [LARGE SCALE GENOMIC DNA]</scope>
    <source>
        <strain>CVM19633</strain>
    </source>
</reference>
<keyword id="KW-0143">Chaperone</keyword>
<keyword id="KW-0963">Cytoplasm</keyword>
<keyword id="KW-0346">Stress response</keyword>
<accession>B4TS61</accession>
<dbReference type="EMBL" id="CP001127">
    <property type="protein sequence ID" value="ACF92805.1"/>
    <property type="molecule type" value="Genomic_DNA"/>
</dbReference>
<dbReference type="RefSeq" id="WP_001518875.1">
    <property type="nucleotide sequence ID" value="NC_011094.1"/>
</dbReference>
<dbReference type="SMR" id="B4TS61"/>
<dbReference type="KEGG" id="sew:SeSA_A2877"/>
<dbReference type="HOGENOM" id="CLU_057217_6_0_6"/>
<dbReference type="Proteomes" id="UP000001865">
    <property type="component" value="Chromosome"/>
</dbReference>
<dbReference type="GO" id="GO:0005829">
    <property type="term" value="C:cytosol"/>
    <property type="evidence" value="ECO:0007669"/>
    <property type="project" value="TreeGrafter"/>
</dbReference>
<dbReference type="GO" id="GO:0000774">
    <property type="term" value="F:adenyl-nucleotide exchange factor activity"/>
    <property type="evidence" value="ECO:0007669"/>
    <property type="project" value="InterPro"/>
</dbReference>
<dbReference type="GO" id="GO:0042803">
    <property type="term" value="F:protein homodimerization activity"/>
    <property type="evidence" value="ECO:0007669"/>
    <property type="project" value="InterPro"/>
</dbReference>
<dbReference type="GO" id="GO:0051087">
    <property type="term" value="F:protein-folding chaperone binding"/>
    <property type="evidence" value="ECO:0007669"/>
    <property type="project" value="InterPro"/>
</dbReference>
<dbReference type="GO" id="GO:0051082">
    <property type="term" value="F:unfolded protein binding"/>
    <property type="evidence" value="ECO:0007669"/>
    <property type="project" value="TreeGrafter"/>
</dbReference>
<dbReference type="GO" id="GO:0006457">
    <property type="term" value="P:protein folding"/>
    <property type="evidence" value="ECO:0007669"/>
    <property type="project" value="InterPro"/>
</dbReference>
<dbReference type="CDD" id="cd00446">
    <property type="entry name" value="GrpE"/>
    <property type="match status" value="1"/>
</dbReference>
<dbReference type="FunFam" id="2.30.22.10:FF:000001">
    <property type="entry name" value="Protein GrpE"/>
    <property type="match status" value="1"/>
</dbReference>
<dbReference type="FunFam" id="3.90.20.20:FF:000001">
    <property type="entry name" value="Protein GrpE"/>
    <property type="match status" value="1"/>
</dbReference>
<dbReference type="Gene3D" id="3.90.20.20">
    <property type="match status" value="1"/>
</dbReference>
<dbReference type="Gene3D" id="2.30.22.10">
    <property type="entry name" value="Head domain of nucleotide exchange factor GrpE"/>
    <property type="match status" value="1"/>
</dbReference>
<dbReference type="HAMAP" id="MF_01151">
    <property type="entry name" value="GrpE"/>
    <property type="match status" value="1"/>
</dbReference>
<dbReference type="InterPro" id="IPR000740">
    <property type="entry name" value="GrpE"/>
</dbReference>
<dbReference type="InterPro" id="IPR013805">
    <property type="entry name" value="GrpE_coiled_coil"/>
</dbReference>
<dbReference type="InterPro" id="IPR009012">
    <property type="entry name" value="GrpE_head"/>
</dbReference>
<dbReference type="NCBIfam" id="NF007655">
    <property type="entry name" value="PRK10325.1"/>
    <property type="match status" value="1"/>
</dbReference>
<dbReference type="NCBIfam" id="NF010738">
    <property type="entry name" value="PRK14140.1"/>
    <property type="match status" value="1"/>
</dbReference>
<dbReference type="NCBIfam" id="NF010748">
    <property type="entry name" value="PRK14150.1"/>
    <property type="match status" value="1"/>
</dbReference>
<dbReference type="PANTHER" id="PTHR21237">
    <property type="entry name" value="GRPE PROTEIN"/>
    <property type="match status" value="1"/>
</dbReference>
<dbReference type="PANTHER" id="PTHR21237:SF23">
    <property type="entry name" value="GRPE PROTEIN HOMOLOG, MITOCHONDRIAL"/>
    <property type="match status" value="1"/>
</dbReference>
<dbReference type="Pfam" id="PF01025">
    <property type="entry name" value="GrpE"/>
    <property type="match status" value="1"/>
</dbReference>
<dbReference type="PRINTS" id="PR00773">
    <property type="entry name" value="GRPEPROTEIN"/>
</dbReference>
<dbReference type="SUPFAM" id="SSF58014">
    <property type="entry name" value="Coiled-coil domain of nucleotide exchange factor GrpE"/>
    <property type="match status" value="1"/>
</dbReference>
<dbReference type="SUPFAM" id="SSF51064">
    <property type="entry name" value="Head domain of nucleotide exchange factor GrpE"/>
    <property type="match status" value="1"/>
</dbReference>
<dbReference type="PROSITE" id="PS01071">
    <property type="entry name" value="GRPE"/>
    <property type="match status" value="1"/>
</dbReference>